<proteinExistence type="inferred from homology"/>
<protein>
    <recommendedName>
        <fullName evidence="1">Dihydroxy-acid dehydratase</fullName>
        <shortName evidence="1">DAD</shortName>
        <ecNumber evidence="1">4.2.1.9</ecNumber>
    </recommendedName>
</protein>
<feature type="chain" id="PRO_0000103537" description="Dihydroxy-acid dehydratase">
    <location>
        <begin position="1"/>
        <end position="547"/>
    </location>
</feature>
<feature type="active site" description="Proton acceptor" evidence="1">
    <location>
        <position position="464"/>
    </location>
</feature>
<feature type="binding site" evidence="1">
    <location>
        <position position="78"/>
    </location>
    <ligand>
        <name>Mg(2+)</name>
        <dbReference type="ChEBI" id="CHEBI:18420"/>
    </ligand>
</feature>
<feature type="binding site" evidence="1">
    <location>
        <position position="119"/>
    </location>
    <ligand>
        <name>[2Fe-2S] cluster</name>
        <dbReference type="ChEBI" id="CHEBI:190135"/>
    </ligand>
</feature>
<feature type="binding site" evidence="1">
    <location>
        <position position="120"/>
    </location>
    <ligand>
        <name>Mg(2+)</name>
        <dbReference type="ChEBI" id="CHEBI:18420"/>
    </ligand>
</feature>
<feature type="binding site" description="via carbamate group" evidence="1">
    <location>
        <position position="121"/>
    </location>
    <ligand>
        <name>Mg(2+)</name>
        <dbReference type="ChEBI" id="CHEBI:18420"/>
    </ligand>
</feature>
<feature type="binding site" evidence="1">
    <location>
        <position position="191"/>
    </location>
    <ligand>
        <name>[2Fe-2S] cluster</name>
        <dbReference type="ChEBI" id="CHEBI:190135"/>
    </ligand>
</feature>
<feature type="binding site" evidence="1">
    <location>
        <position position="439"/>
    </location>
    <ligand>
        <name>Mg(2+)</name>
        <dbReference type="ChEBI" id="CHEBI:18420"/>
    </ligand>
</feature>
<feature type="modified residue" description="N6-carboxylysine" evidence="1">
    <location>
        <position position="121"/>
    </location>
</feature>
<reference key="1">
    <citation type="journal article" date="1997" name="Nature">
        <title>The complete genome sequence of the hyperthermophilic, sulphate-reducing archaeon Archaeoglobus fulgidus.</title>
        <authorList>
            <person name="Klenk H.-P."/>
            <person name="Clayton R.A."/>
            <person name="Tomb J.-F."/>
            <person name="White O."/>
            <person name="Nelson K.E."/>
            <person name="Ketchum K.A."/>
            <person name="Dodson R.J."/>
            <person name="Gwinn M.L."/>
            <person name="Hickey E.K."/>
            <person name="Peterson J.D."/>
            <person name="Richardson D.L."/>
            <person name="Kerlavage A.R."/>
            <person name="Graham D.E."/>
            <person name="Kyrpides N.C."/>
            <person name="Fleischmann R.D."/>
            <person name="Quackenbush J."/>
            <person name="Lee N.H."/>
            <person name="Sutton G.G."/>
            <person name="Gill S.R."/>
            <person name="Kirkness E.F."/>
            <person name="Dougherty B.A."/>
            <person name="McKenney K."/>
            <person name="Adams M.D."/>
            <person name="Loftus B.J."/>
            <person name="Peterson S.N."/>
            <person name="Reich C.I."/>
            <person name="McNeil L.K."/>
            <person name="Badger J.H."/>
            <person name="Glodek A."/>
            <person name="Zhou L."/>
            <person name="Overbeek R."/>
            <person name="Gocayne J.D."/>
            <person name="Weidman J.F."/>
            <person name="McDonald L.A."/>
            <person name="Utterback T.R."/>
            <person name="Cotton M.D."/>
            <person name="Spriggs T."/>
            <person name="Artiach P."/>
            <person name="Kaine B.P."/>
            <person name="Sykes S.M."/>
            <person name="Sadow P.W."/>
            <person name="D'Andrea K.P."/>
            <person name="Bowman C."/>
            <person name="Fujii C."/>
            <person name="Garland S.A."/>
            <person name="Mason T.M."/>
            <person name="Olsen G.J."/>
            <person name="Fraser C.M."/>
            <person name="Smith H.O."/>
            <person name="Woese C.R."/>
            <person name="Venter J.C."/>
        </authorList>
    </citation>
    <scope>NUCLEOTIDE SEQUENCE [LARGE SCALE GENOMIC DNA]</scope>
    <source>
        <strain>ATCC 49558 / DSM 4304 / JCM 9628 / NBRC 100126 / VC-16</strain>
    </source>
</reference>
<dbReference type="EC" id="4.2.1.9" evidence="1"/>
<dbReference type="EMBL" id="AE000782">
    <property type="protein sequence ID" value="AAB90229.1"/>
    <property type="molecule type" value="Genomic_DNA"/>
</dbReference>
<dbReference type="PIR" id="F69376">
    <property type="entry name" value="F69376"/>
</dbReference>
<dbReference type="RefSeq" id="WP_010878514.1">
    <property type="nucleotide sequence ID" value="NC_000917.1"/>
</dbReference>
<dbReference type="SMR" id="O29248"/>
<dbReference type="STRING" id="224325.AF_1014"/>
<dbReference type="PaxDb" id="224325-AF_1014"/>
<dbReference type="EnsemblBacteria" id="AAB90229">
    <property type="protein sequence ID" value="AAB90229"/>
    <property type="gene ID" value="AF_1014"/>
</dbReference>
<dbReference type="GeneID" id="24794622"/>
<dbReference type="KEGG" id="afu:AF_1014"/>
<dbReference type="eggNOG" id="arCOG04045">
    <property type="taxonomic scope" value="Archaea"/>
</dbReference>
<dbReference type="HOGENOM" id="CLU_014271_4_2_2"/>
<dbReference type="OrthoDB" id="8674at2157"/>
<dbReference type="PhylomeDB" id="O29248"/>
<dbReference type="UniPathway" id="UPA00047">
    <property type="reaction ID" value="UER00057"/>
</dbReference>
<dbReference type="UniPathway" id="UPA00049">
    <property type="reaction ID" value="UER00061"/>
</dbReference>
<dbReference type="Proteomes" id="UP000002199">
    <property type="component" value="Chromosome"/>
</dbReference>
<dbReference type="GO" id="GO:0005829">
    <property type="term" value="C:cytosol"/>
    <property type="evidence" value="ECO:0007669"/>
    <property type="project" value="TreeGrafter"/>
</dbReference>
<dbReference type="GO" id="GO:0051537">
    <property type="term" value="F:2 iron, 2 sulfur cluster binding"/>
    <property type="evidence" value="ECO:0007669"/>
    <property type="project" value="UniProtKB-UniRule"/>
</dbReference>
<dbReference type="GO" id="GO:0004160">
    <property type="term" value="F:dihydroxy-acid dehydratase activity"/>
    <property type="evidence" value="ECO:0007669"/>
    <property type="project" value="UniProtKB-UniRule"/>
</dbReference>
<dbReference type="GO" id="GO:0000287">
    <property type="term" value="F:magnesium ion binding"/>
    <property type="evidence" value="ECO:0007669"/>
    <property type="project" value="UniProtKB-UniRule"/>
</dbReference>
<dbReference type="GO" id="GO:0009097">
    <property type="term" value="P:isoleucine biosynthetic process"/>
    <property type="evidence" value="ECO:0007669"/>
    <property type="project" value="UniProtKB-UniRule"/>
</dbReference>
<dbReference type="GO" id="GO:0009099">
    <property type="term" value="P:L-valine biosynthetic process"/>
    <property type="evidence" value="ECO:0007669"/>
    <property type="project" value="UniProtKB-UniRule"/>
</dbReference>
<dbReference type="FunFam" id="3.50.30.80:FF:000001">
    <property type="entry name" value="Dihydroxy-acid dehydratase"/>
    <property type="match status" value="1"/>
</dbReference>
<dbReference type="Gene3D" id="3.50.30.80">
    <property type="entry name" value="IlvD/EDD C-terminal domain-like"/>
    <property type="match status" value="1"/>
</dbReference>
<dbReference type="HAMAP" id="MF_00012">
    <property type="entry name" value="IlvD"/>
    <property type="match status" value="1"/>
</dbReference>
<dbReference type="InterPro" id="IPR042096">
    <property type="entry name" value="Dihydro-acid_dehy_C"/>
</dbReference>
<dbReference type="InterPro" id="IPR004404">
    <property type="entry name" value="DihydroxyA_deHydtase"/>
</dbReference>
<dbReference type="InterPro" id="IPR020558">
    <property type="entry name" value="DiOHA_6PGluconate_deHydtase_CS"/>
</dbReference>
<dbReference type="InterPro" id="IPR056740">
    <property type="entry name" value="ILV_EDD_C"/>
</dbReference>
<dbReference type="InterPro" id="IPR000581">
    <property type="entry name" value="ILV_EDD_N"/>
</dbReference>
<dbReference type="InterPro" id="IPR037237">
    <property type="entry name" value="IlvD/EDD_N"/>
</dbReference>
<dbReference type="NCBIfam" id="TIGR00110">
    <property type="entry name" value="ilvD"/>
    <property type="match status" value="1"/>
</dbReference>
<dbReference type="NCBIfam" id="NF002068">
    <property type="entry name" value="PRK00911.1"/>
    <property type="match status" value="1"/>
</dbReference>
<dbReference type="PANTHER" id="PTHR43661">
    <property type="entry name" value="D-XYLONATE DEHYDRATASE"/>
    <property type="match status" value="1"/>
</dbReference>
<dbReference type="PANTHER" id="PTHR43661:SF3">
    <property type="entry name" value="D-XYLONATE DEHYDRATASE YAGF-RELATED"/>
    <property type="match status" value="1"/>
</dbReference>
<dbReference type="Pfam" id="PF24877">
    <property type="entry name" value="ILV_EDD_C"/>
    <property type="match status" value="1"/>
</dbReference>
<dbReference type="Pfam" id="PF00920">
    <property type="entry name" value="ILVD_EDD_N"/>
    <property type="match status" value="1"/>
</dbReference>
<dbReference type="SUPFAM" id="SSF143975">
    <property type="entry name" value="IlvD/EDD N-terminal domain-like"/>
    <property type="match status" value="1"/>
</dbReference>
<dbReference type="SUPFAM" id="SSF52016">
    <property type="entry name" value="LeuD/IlvD-like"/>
    <property type="match status" value="1"/>
</dbReference>
<dbReference type="PROSITE" id="PS00886">
    <property type="entry name" value="ILVD_EDD_1"/>
    <property type="match status" value="1"/>
</dbReference>
<dbReference type="PROSITE" id="PS00887">
    <property type="entry name" value="ILVD_EDD_2"/>
    <property type="match status" value="1"/>
</dbReference>
<accession>O29248</accession>
<name>ILVD_ARCFU</name>
<keyword id="KW-0001">2Fe-2S</keyword>
<keyword id="KW-0028">Amino-acid biosynthesis</keyword>
<keyword id="KW-0100">Branched-chain amino acid biosynthesis</keyword>
<keyword id="KW-0408">Iron</keyword>
<keyword id="KW-0411">Iron-sulfur</keyword>
<keyword id="KW-0456">Lyase</keyword>
<keyword id="KW-0460">Magnesium</keyword>
<keyword id="KW-0479">Metal-binding</keyword>
<keyword id="KW-1185">Reference proteome</keyword>
<organism>
    <name type="scientific">Archaeoglobus fulgidus (strain ATCC 49558 / DSM 4304 / JCM 9628 / NBRC 100126 / VC-16)</name>
    <dbReference type="NCBI Taxonomy" id="224325"/>
    <lineage>
        <taxon>Archaea</taxon>
        <taxon>Methanobacteriati</taxon>
        <taxon>Methanobacteriota</taxon>
        <taxon>Archaeoglobi</taxon>
        <taxon>Archaeoglobales</taxon>
        <taxon>Archaeoglobaceae</taxon>
        <taxon>Archaeoglobus</taxon>
    </lineage>
</organism>
<comment type="function">
    <text evidence="1">Functions in the biosynthesis of branched-chain amino acids. Catalyzes the dehydration of (2R,3R)-2,3-dihydroxy-3-methylpentanoate (2,3-dihydroxy-3-methylvalerate) into 2-oxo-3-methylpentanoate (2-oxo-3-methylvalerate) and of (2R)-2,3-dihydroxy-3-methylbutanoate (2,3-dihydroxyisovalerate) into 2-oxo-3-methylbutanoate (2-oxoisovalerate), the penultimate precursor to L-isoleucine and L-valine, respectively.</text>
</comment>
<comment type="catalytic activity">
    <reaction evidence="1">
        <text>(2R)-2,3-dihydroxy-3-methylbutanoate = 3-methyl-2-oxobutanoate + H2O</text>
        <dbReference type="Rhea" id="RHEA:24809"/>
        <dbReference type="ChEBI" id="CHEBI:11851"/>
        <dbReference type="ChEBI" id="CHEBI:15377"/>
        <dbReference type="ChEBI" id="CHEBI:49072"/>
        <dbReference type="EC" id="4.2.1.9"/>
    </reaction>
    <physiologicalReaction direction="left-to-right" evidence="1">
        <dbReference type="Rhea" id="RHEA:24810"/>
    </physiologicalReaction>
</comment>
<comment type="catalytic activity">
    <reaction evidence="1">
        <text>(2R,3R)-2,3-dihydroxy-3-methylpentanoate = (S)-3-methyl-2-oxopentanoate + H2O</text>
        <dbReference type="Rhea" id="RHEA:27694"/>
        <dbReference type="ChEBI" id="CHEBI:15377"/>
        <dbReference type="ChEBI" id="CHEBI:35146"/>
        <dbReference type="ChEBI" id="CHEBI:49258"/>
        <dbReference type="EC" id="4.2.1.9"/>
    </reaction>
    <physiologicalReaction direction="left-to-right" evidence="1">
        <dbReference type="Rhea" id="RHEA:27695"/>
    </physiologicalReaction>
</comment>
<comment type="cofactor">
    <cofactor evidence="1">
        <name>[2Fe-2S] cluster</name>
        <dbReference type="ChEBI" id="CHEBI:190135"/>
    </cofactor>
    <text evidence="1">Binds 1 [2Fe-2S] cluster per subunit. This cluster acts as a Lewis acid cofactor.</text>
</comment>
<comment type="cofactor">
    <cofactor evidence="1">
        <name>Mg(2+)</name>
        <dbReference type="ChEBI" id="CHEBI:18420"/>
    </cofactor>
</comment>
<comment type="pathway">
    <text evidence="1">Amino-acid biosynthesis; L-isoleucine biosynthesis; L-isoleucine from 2-oxobutanoate: step 3/4.</text>
</comment>
<comment type="pathway">
    <text evidence="1">Amino-acid biosynthesis; L-valine biosynthesis; L-valine from pyruvate: step 3/4.</text>
</comment>
<comment type="subunit">
    <text evidence="1">Homodimer.</text>
</comment>
<comment type="similarity">
    <text evidence="1">Belongs to the IlvD/Edd family.</text>
</comment>
<evidence type="ECO:0000255" key="1">
    <source>
        <dbReference type="HAMAP-Rule" id="MF_00012"/>
    </source>
</evidence>
<gene>
    <name evidence="1" type="primary">ilvD</name>
    <name type="ordered locus">AF_1014</name>
</gene>
<sequence>MRSDEVKKGIDRVAHRALLKALGVTDDEMDKPFIGVANAYNTIVPGHMTLDKLTQAVKEGVYAAGGVPFEFGIIGICDGIAMGHEGMCFSLPSRELVADTIEAMVEAHRFDGLVVVASCDKIIPGMLMAMLRLNIPAIAVTGGPMPYERVGGEKVSIKDAFEAAGMYKAGKLDDAGLKLYEDYCAPYCGSCQGLYTANSMQILTETLGLSLPYCSTSPCPSSRKLRIAKQSGKRVVELVMQNIKPLDFVNERSFENAITMDMLVGGSTNTVLHLPAIAKEAGIRLSLDLFDEISRRTPHIVSIDPASKEMVVDLDESGGVPMLIKKARKYFHDEMTVSGKTLYEIAEMAVLRGRDIIASPDNPLHKEGGIAILKGNLAENGAVIKAAAVSEDMMRFEGTAKVYDSEKEALNAILDGKVEEGDVVVIRYMGPKGAPGMPEMLLPTAAISGLGLQKVALITDGRFSGATRGPCIGHVSPEAAVGGNIALVEDGDKISIDIPARKLEVKLSDEELAERRAKWKPKEKELKGYLAKYAKLVRGAEEGAALL</sequence>